<proteinExistence type="evidence at transcript level"/>
<dbReference type="EMBL" id="AF097914">
    <property type="protein sequence ID" value="AAD10038.1"/>
    <property type="molecule type" value="mRNA"/>
</dbReference>
<dbReference type="SMR" id="O96642"/>
<dbReference type="Proteomes" id="UP000515135">
    <property type="component" value="Unplaced"/>
</dbReference>
<dbReference type="GO" id="GO:0005634">
    <property type="term" value="C:nucleus"/>
    <property type="evidence" value="ECO:0007669"/>
    <property type="project" value="UniProtKB-SubCell"/>
</dbReference>
<dbReference type="GO" id="GO:0000981">
    <property type="term" value="F:DNA-binding transcription factor activity, RNA polymerase II-specific"/>
    <property type="evidence" value="ECO:0007669"/>
    <property type="project" value="TreeGrafter"/>
</dbReference>
<dbReference type="GO" id="GO:0046983">
    <property type="term" value="F:protein dimerization activity"/>
    <property type="evidence" value="ECO:0007669"/>
    <property type="project" value="InterPro"/>
</dbReference>
<dbReference type="GO" id="GO:0000977">
    <property type="term" value="F:RNA polymerase II transcription regulatory region sequence-specific DNA binding"/>
    <property type="evidence" value="ECO:0007669"/>
    <property type="project" value="TreeGrafter"/>
</dbReference>
<dbReference type="GO" id="GO:0030154">
    <property type="term" value="P:cell differentiation"/>
    <property type="evidence" value="ECO:0007669"/>
    <property type="project" value="UniProtKB-KW"/>
</dbReference>
<dbReference type="GO" id="GO:0007498">
    <property type="term" value="P:mesoderm development"/>
    <property type="evidence" value="ECO:0000303"/>
    <property type="project" value="UniProtKB"/>
</dbReference>
<dbReference type="GO" id="GO:0045596">
    <property type="term" value="P:negative regulation of cell differentiation"/>
    <property type="evidence" value="ECO:0000303"/>
    <property type="project" value="UniProtKB"/>
</dbReference>
<dbReference type="FunFam" id="4.10.280.10:FF:000030">
    <property type="entry name" value="Twist transcription factor"/>
    <property type="match status" value="1"/>
</dbReference>
<dbReference type="Gene3D" id="4.10.280.10">
    <property type="entry name" value="Helix-loop-helix DNA-binding domain"/>
    <property type="match status" value="1"/>
</dbReference>
<dbReference type="InterPro" id="IPR011598">
    <property type="entry name" value="bHLH_dom"/>
</dbReference>
<dbReference type="InterPro" id="IPR050283">
    <property type="entry name" value="E-box_TF_Regulators"/>
</dbReference>
<dbReference type="InterPro" id="IPR036638">
    <property type="entry name" value="HLH_DNA-bd_sf"/>
</dbReference>
<dbReference type="PANTHER" id="PTHR23349">
    <property type="entry name" value="BASIC HELIX-LOOP-HELIX TRANSCRIPTION FACTOR, TWIST"/>
    <property type="match status" value="1"/>
</dbReference>
<dbReference type="PANTHER" id="PTHR23349:SF50">
    <property type="entry name" value="PROTEIN TWIST"/>
    <property type="match status" value="1"/>
</dbReference>
<dbReference type="Pfam" id="PF00010">
    <property type="entry name" value="HLH"/>
    <property type="match status" value="1"/>
</dbReference>
<dbReference type="SMART" id="SM00353">
    <property type="entry name" value="HLH"/>
    <property type="match status" value="1"/>
</dbReference>
<dbReference type="SUPFAM" id="SSF47459">
    <property type="entry name" value="HLH, helix-loop-helix DNA-binding domain"/>
    <property type="match status" value="1"/>
</dbReference>
<dbReference type="PROSITE" id="PS50888">
    <property type="entry name" value="BHLH"/>
    <property type="match status" value="1"/>
</dbReference>
<organism evidence="7">
    <name type="scientific">Branchiostoma belcheri</name>
    <name type="common">Amphioxus</name>
    <dbReference type="NCBI Taxonomy" id="7741"/>
    <lineage>
        <taxon>Eukaryota</taxon>
        <taxon>Metazoa</taxon>
        <taxon>Chordata</taxon>
        <taxon>Cephalochordata</taxon>
        <taxon>Leptocardii</taxon>
        <taxon>Amphioxiformes</taxon>
        <taxon>Branchiostomatidae</taxon>
        <taxon>Branchiostoma</taxon>
    </lineage>
</organism>
<accession>O96642</accession>
<sequence length="196" mass="21625">MAADVVTYTTLETFSHEDLVKPDPDASPLADHSSSGPEAEEDPSRSKRYERKRRYSKSSASSDDGSTGGGSVGGGKSGKNRKKTSKAESFEDLQNQRVLANVRERQRTQSLNEAFSSLRKIIPTLPSDKLSKIQTLKLAARYIDFLYQVLRSDDTDTKMASSCSYVAHERLSYAFSVSRQELYFGLGAPSSGPNHF</sequence>
<feature type="chain" id="PRO_0000127492" description="Twist-related protein">
    <location>
        <begin position="1"/>
        <end position="196"/>
    </location>
</feature>
<feature type="domain" description="bHLH" evidence="2">
    <location>
        <begin position="95"/>
        <end position="146"/>
    </location>
</feature>
<feature type="region of interest" description="Disordered" evidence="3">
    <location>
        <begin position="1"/>
        <end position="92"/>
    </location>
</feature>
<feature type="compositionally biased region" description="Basic and acidic residues" evidence="3">
    <location>
        <begin position="14"/>
        <end position="24"/>
    </location>
</feature>
<feature type="compositionally biased region" description="Gly residues" evidence="3">
    <location>
        <begin position="66"/>
        <end position="77"/>
    </location>
</feature>
<gene>
    <name type="primary">TWIST</name>
</gene>
<protein>
    <recommendedName>
        <fullName>Twist-related protein</fullName>
    </recommendedName>
    <alternativeName>
        <fullName>BBtwist</fullName>
    </alternativeName>
</protein>
<evidence type="ECO:0000250" key="1"/>
<evidence type="ECO:0000255" key="2">
    <source>
        <dbReference type="PROSITE-ProRule" id="PRU00981"/>
    </source>
</evidence>
<evidence type="ECO:0000256" key="3">
    <source>
        <dbReference type="SAM" id="MobiDB-lite"/>
    </source>
</evidence>
<evidence type="ECO:0000269" key="4">
    <source>
    </source>
</evidence>
<evidence type="ECO:0000303" key="5">
    <source>
    </source>
</evidence>
<evidence type="ECO:0000305" key="6"/>
<evidence type="ECO:0000312" key="7">
    <source>
        <dbReference type="EMBL" id="AAD10038.1"/>
    </source>
</evidence>
<keyword id="KW-0217">Developmental protein</keyword>
<keyword id="KW-0221">Differentiation</keyword>
<keyword id="KW-0238">DNA-binding</keyword>
<keyword id="KW-0539">Nucleus</keyword>
<keyword id="KW-1185">Reference proteome</keyword>
<keyword id="KW-0804">Transcription</keyword>
<keyword id="KW-0805">Transcription regulation</keyword>
<comment type="function">
    <text evidence="5">Probable transcription factor with a role in initial mesoderm differentiation.</text>
</comment>
<comment type="subunit">
    <text evidence="1">Efficient DNA binding requires dimerization with another bHLH protein. Homodimer (By similarity).</text>
</comment>
<comment type="subcellular location">
    <subcellularLocation>
        <location>Nucleus</location>
    </subcellularLocation>
</comment>
<comment type="tissue specificity">
    <text evidence="4">In late gastrula embryos, expressed in the presumptive first pair of somites and the middorsal wall of the primitive gut. Expression is then up-regulated in the lateral wall of the somites and the notochord. At the late neurula stage, also expressed in the anterior wall of the primitive gut and in the evaginating lateral diverticula. In the earliest larval stage, expression is restricted to both ends of the body. In 36 hour larvae, only faint expression is detected in the notochordal and paraxial mesoderm of the caudal region.</text>
</comment>
<comment type="developmental stage">
    <text evidence="4">Expressed in late gastrulae stage G6 to larval stage L2.</text>
</comment>
<name>TWIST_BRABE</name>
<reference evidence="6" key="1">
    <citation type="journal article" date="1998" name="Dev. Biol.">
        <title>Expression of a twist-related gene, Bbtwist, during the development of a lancelet species and its relation to cephalochordate anterior structures.</title>
        <authorList>
            <person name="Yasui K."/>
            <person name="Zhang S.-C."/>
            <person name="Uemura M."/>
            <person name="Aizawa S."/>
            <person name="Ueki T."/>
        </authorList>
    </citation>
    <scope>NUCLEOTIDE SEQUENCE [MRNA]</scope>
    <scope>TISSUE SPECIFICITY</scope>
    <scope>DEVELOPMENTAL STAGE</scope>
    <source>
        <strain>Subsp. tsingtauense</strain>
        <tissue>Neurula</tissue>
    </source>
</reference>